<gene>
    <name type="primary">ldh</name>
    <name type="ordered locus">H16_A0666</name>
</gene>
<evidence type="ECO:0000256" key="1">
    <source>
        <dbReference type="SAM" id="MobiDB-lite"/>
    </source>
</evidence>
<evidence type="ECO:0000305" key="2"/>
<reference key="1">
    <citation type="journal article" date="1993" name="FEMS Microbiol. Lett.">
        <title>The Alcaligenes eutrophus ldh structural gene encodes a novel type of lactate dehydrogenase.</title>
        <authorList>
            <person name="Jendrossek D."/>
            <person name="Kratzin H.D."/>
            <person name="Steinbuechel A."/>
        </authorList>
    </citation>
    <scope>NUCLEOTIDE SEQUENCE [GENOMIC DNA]</scope>
    <scope>PROTEIN SEQUENCE OF 1-27</scope>
</reference>
<reference key="2">
    <citation type="journal article" date="2006" name="Nat. Biotechnol.">
        <title>Genome sequence of the bioplastic-producing 'Knallgas' bacterium Ralstonia eutropha H16.</title>
        <authorList>
            <person name="Pohlmann A."/>
            <person name="Fricke W.F."/>
            <person name="Reinecke F."/>
            <person name="Kusian B."/>
            <person name="Liesegang H."/>
            <person name="Cramm R."/>
            <person name="Eitinger T."/>
            <person name="Ewering C."/>
            <person name="Poetter M."/>
            <person name="Schwartz E."/>
            <person name="Strittmatter A."/>
            <person name="Voss I."/>
            <person name="Gottschalk G."/>
            <person name="Steinbuechel A."/>
            <person name="Friedrich B."/>
            <person name="Bowien B."/>
        </authorList>
    </citation>
    <scope>NUCLEOTIDE SEQUENCE [LARGE SCALE GENOMIC DNA]</scope>
    <source>
        <strain>ATCC 17699 / DSM 428 / KCTC 22496 / NCIMB 10442 / H16 / Stanier 337</strain>
    </source>
</reference>
<feature type="chain" id="PRO_0000083826" description="L-lactate dehydrogenase">
    <location>
        <begin position="1"/>
        <end position="349"/>
    </location>
</feature>
<feature type="region of interest" description="Disordered" evidence="1">
    <location>
        <begin position="199"/>
        <end position="219"/>
    </location>
</feature>
<name>LDH_CUPNH</name>
<accession>Q07251</accession>
<accession>Q0KDV7</accession>
<dbReference type="EC" id="1.1.1.27"/>
<dbReference type="EMBL" id="Z22737">
    <property type="protein sequence ID" value="CAA80432.1"/>
    <property type="molecule type" value="Genomic_DNA"/>
</dbReference>
<dbReference type="EMBL" id="AM260479">
    <property type="protein sequence ID" value="CAJ91814.1"/>
    <property type="molecule type" value="Genomic_DNA"/>
</dbReference>
<dbReference type="PIR" id="I39535">
    <property type="entry name" value="I39535"/>
</dbReference>
<dbReference type="RefSeq" id="WP_011614641.1">
    <property type="nucleotide sequence ID" value="NC_008313.1"/>
</dbReference>
<dbReference type="SMR" id="Q07251"/>
<dbReference type="STRING" id="381666.H16_A0666"/>
<dbReference type="KEGG" id="reh:H16_A0666"/>
<dbReference type="PATRIC" id="fig|381666.6.peg.1034"/>
<dbReference type="eggNOG" id="COG2055">
    <property type="taxonomic scope" value="Bacteria"/>
</dbReference>
<dbReference type="HOGENOM" id="CLU_040452_1_0_4"/>
<dbReference type="OrthoDB" id="924592at2"/>
<dbReference type="UniPathway" id="UPA00554">
    <property type="reaction ID" value="UER00611"/>
</dbReference>
<dbReference type="Proteomes" id="UP000008210">
    <property type="component" value="Chromosome 1"/>
</dbReference>
<dbReference type="GO" id="GO:0005737">
    <property type="term" value="C:cytoplasm"/>
    <property type="evidence" value="ECO:0007669"/>
    <property type="project" value="UniProtKB-SubCell"/>
</dbReference>
<dbReference type="GO" id="GO:0004459">
    <property type="term" value="F:L-lactate dehydrogenase activity"/>
    <property type="evidence" value="ECO:0007669"/>
    <property type="project" value="UniProtKB-EC"/>
</dbReference>
<dbReference type="Gene3D" id="1.10.1530.10">
    <property type="match status" value="1"/>
</dbReference>
<dbReference type="Gene3D" id="3.30.1370.60">
    <property type="entry name" value="Hypothetical oxidoreductase yiak, domain 2"/>
    <property type="match status" value="1"/>
</dbReference>
<dbReference type="InterPro" id="IPR043144">
    <property type="entry name" value="Mal/L-sulf/L-lact_DH-like_ah"/>
</dbReference>
<dbReference type="InterPro" id="IPR043143">
    <property type="entry name" value="Mal/L-sulf/L-lact_DH-like_NADP"/>
</dbReference>
<dbReference type="InterPro" id="IPR036111">
    <property type="entry name" value="Mal/L-sulfo/L-lacto_DH-like_sf"/>
</dbReference>
<dbReference type="InterPro" id="IPR003767">
    <property type="entry name" value="Malate/L-lactate_DH-like"/>
</dbReference>
<dbReference type="PANTHER" id="PTHR11091:SF0">
    <property type="entry name" value="MALATE DEHYDROGENASE"/>
    <property type="match status" value="1"/>
</dbReference>
<dbReference type="PANTHER" id="PTHR11091">
    <property type="entry name" value="OXIDOREDUCTASE-RELATED"/>
    <property type="match status" value="1"/>
</dbReference>
<dbReference type="Pfam" id="PF02615">
    <property type="entry name" value="Ldh_2"/>
    <property type="match status" value="1"/>
</dbReference>
<dbReference type="SUPFAM" id="SSF89733">
    <property type="entry name" value="L-sulfolactate dehydrogenase-like"/>
    <property type="match status" value="1"/>
</dbReference>
<organism>
    <name type="scientific">Cupriavidus necator (strain ATCC 17699 / DSM 428 / KCTC 22496 / NCIMB 10442 / H16 / Stanier 337)</name>
    <name type="common">Ralstonia eutropha</name>
    <dbReference type="NCBI Taxonomy" id="381666"/>
    <lineage>
        <taxon>Bacteria</taxon>
        <taxon>Pseudomonadati</taxon>
        <taxon>Pseudomonadota</taxon>
        <taxon>Betaproteobacteria</taxon>
        <taxon>Burkholderiales</taxon>
        <taxon>Burkholderiaceae</taxon>
        <taxon>Cupriavidus</taxon>
    </lineage>
</organism>
<proteinExistence type="evidence at protein level"/>
<keyword id="KW-0963">Cytoplasm</keyword>
<keyword id="KW-0903">Direct protein sequencing</keyword>
<keyword id="KW-0520">NAD</keyword>
<keyword id="KW-0560">Oxidoreductase</keyword>
<keyword id="KW-1185">Reference proteome</keyword>
<sequence>MKISLTSARQLARDILAAQQVPADIADDVAEHLVESDRCGYISHGLSILPNYRTALDGHSVNPQGRAKCVLDQGTLMVFDGDGGFGQHVGKSVMQAAIERVRQHGHCIVTLRRSHHLGRMGHYGEMAAAAGFVLLSFTNVINRAPVVAPFGGRVARLTTNPLCFAGPMPNGRPPLVVDIATSAIAINKARVLAEKGEPAPEGSIIGADGNPTTDASTMFGEHPGALLPFGGHKGYALGVVAELLAGVLSGGGTIQPDNPRGGVATNNLFAVLLNPALDLGLDWQSAEVEAFVRYLHDTPPAPGVDRVQYPGEYEAANRAQASDTLNINPAIWRNLERLAQSLNVAVPTA</sequence>
<protein>
    <recommendedName>
        <fullName>L-lactate dehydrogenase</fullName>
        <ecNumber>1.1.1.27</ecNumber>
    </recommendedName>
</protein>
<comment type="catalytic activity">
    <reaction>
        <text>(S)-lactate + NAD(+) = pyruvate + NADH + H(+)</text>
        <dbReference type="Rhea" id="RHEA:23444"/>
        <dbReference type="ChEBI" id="CHEBI:15361"/>
        <dbReference type="ChEBI" id="CHEBI:15378"/>
        <dbReference type="ChEBI" id="CHEBI:16651"/>
        <dbReference type="ChEBI" id="CHEBI:57540"/>
        <dbReference type="ChEBI" id="CHEBI:57945"/>
        <dbReference type="EC" id="1.1.1.27"/>
    </reaction>
</comment>
<comment type="pathway">
    <text>Fermentation; pyruvate fermentation to lactate; (S)-lactate from pyruvate: step 1/1.</text>
</comment>
<comment type="subcellular location">
    <subcellularLocation>
        <location evidence="2">Cytoplasm</location>
    </subcellularLocation>
</comment>
<comment type="similarity">
    <text evidence="2">Belongs to the LDH2/MDH2 oxidoreductase family.</text>
</comment>